<dbReference type="EC" id="5.4.2.10" evidence="1"/>
<dbReference type="EMBL" id="CP000444">
    <property type="protein sequence ID" value="ABI42397.1"/>
    <property type="molecule type" value="Genomic_DNA"/>
</dbReference>
<dbReference type="SMR" id="Q0HWV8"/>
<dbReference type="KEGG" id="shm:Shewmr7_1398"/>
<dbReference type="HOGENOM" id="CLU_016950_7_0_6"/>
<dbReference type="GO" id="GO:0005829">
    <property type="term" value="C:cytosol"/>
    <property type="evidence" value="ECO:0007669"/>
    <property type="project" value="TreeGrafter"/>
</dbReference>
<dbReference type="GO" id="GO:0000287">
    <property type="term" value="F:magnesium ion binding"/>
    <property type="evidence" value="ECO:0007669"/>
    <property type="project" value="UniProtKB-UniRule"/>
</dbReference>
<dbReference type="GO" id="GO:0008966">
    <property type="term" value="F:phosphoglucosamine mutase activity"/>
    <property type="evidence" value="ECO:0007669"/>
    <property type="project" value="UniProtKB-UniRule"/>
</dbReference>
<dbReference type="GO" id="GO:0004615">
    <property type="term" value="F:phosphomannomutase activity"/>
    <property type="evidence" value="ECO:0007669"/>
    <property type="project" value="TreeGrafter"/>
</dbReference>
<dbReference type="GO" id="GO:0005975">
    <property type="term" value="P:carbohydrate metabolic process"/>
    <property type="evidence" value="ECO:0007669"/>
    <property type="project" value="InterPro"/>
</dbReference>
<dbReference type="GO" id="GO:0009252">
    <property type="term" value="P:peptidoglycan biosynthetic process"/>
    <property type="evidence" value="ECO:0007669"/>
    <property type="project" value="TreeGrafter"/>
</dbReference>
<dbReference type="GO" id="GO:0006048">
    <property type="term" value="P:UDP-N-acetylglucosamine biosynthetic process"/>
    <property type="evidence" value="ECO:0007669"/>
    <property type="project" value="TreeGrafter"/>
</dbReference>
<dbReference type="CDD" id="cd05802">
    <property type="entry name" value="GlmM"/>
    <property type="match status" value="1"/>
</dbReference>
<dbReference type="FunFam" id="3.30.310.50:FF:000001">
    <property type="entry name" value="Phosphoglucosamine mutase"/>
    <property type="match status" value="1"/>
</dbReference>
<dbReference type="FunFam" id="3.40.120.10:FF:000001">
    <property type="entry name" value="Phosphoglucosamine mutase"/>
    <property type="match status" value="1"/>
</dbReference>
<dbReference type="FunFam" id="3.40.120.10:FF:000003">
    <property type="entry name" value="Phosphoglucosamine mutase"/>
    <property type="match status" value="1"/>
</dbReference>
<dbReference type="Gene3D" id="3.40.120.10">
    <property type="entry name" value="Alpha-D-Glucose-1,6-Bisphosphate, subunit A, domain 3"/>
    <property type="match status" value="3"/>
</dbReference>
<dbReference type="Gene3D" id="3.30.310.50">
    <property type="entry name" value="Alpha-D-phosphohexomutase, C-terminal domain"/>
    <property type="match status" value="1"/>
</dbReference>
<dbReference type="HAMAP" id="MF_01554_B">
    <property type="entry name" value="GlmM_B"/>
    <property type="match status" value="1"/>
</dbReference>
<dbReference type="InterPro" id="IPR005844">
    <property type="entry name" value="A-D-PHexomutase_a/b/a-I"/>
</dbReference>
<dbReference type="InterPro" id="IPR016055">
    <property type="entry name" value="A-D-PHexomutase_a/b/a-I/II/III"/>
</dbReference>
<dbReference type="InterPro" id="IPR005845">
    <property type="entry name" value="A-D-PHexomutase_a/b/a-II"/>
</dbReference>
<dbReference type="InterPro" id="IPR005846">
    <property type="entry name" value="A-D-PHexomutase_a/b/a-III"/>
</dbReference>
<dbReference type="InterPro" id="IPR005843">
    <property type="entry name" value="A-D-PHexomutase_C"/>
</dbReference>
<dbReference type="InterPro" id="IPR036900">
    <property type="entry name" value="A-D-PHexomutase_C_sf"/>
</dbReference>
<dbReference type="InterPro" id="IPR016066">
    <property type="entry name" value="A-D-PHexomutase_CS"/>
</dbReference>
<dbReference type="InterPro" id="IPR005841">
    <property type="entry name" value="Alpha-D-phosphohexomutase_SF"/>
</dbReference>
<dbReference type="InterPro" id="IPR006352">
    <property type="entry name" value="GlmM_bact"/>
</dbReference>
<dbReference type="InterPro" id="IPR050060">
    <property type="entry name" value="Phosphoglucosamine_mutase"/>
</dbReference>
<dbReference type="NCBIfam" id="TIGR01455">
    <property type="entry name" value="glmM"/>
    <property type="match status" value="1"/>
</dbReference>
<dbReference type="NCBIfam" id="NF008139">
    <property type="entry name" value="PRK10887.1"/>
    <property type="match status" value="1"/>
</dbReference>
<dbReference type="PANTHER" id="PTHR42946:SF1">
    <property type="entry name" value="PHOSPHOGLUCOMUTASE (ALPHA-D-GLUCOSE-1,6-BISPHOSPHATE-DEPENDENT)"/>
    <property type="match status" value="1"/>
</dbReference>
<dbReference type="PANTHER" id="PTHR42946">
    <property type="entry name" value="PHOSPHOHEXOSE MUTASE"/>
    <property type="match status" value="1"/>
</dbReference>
<dbReference type="Pfam" id="PF02878">
    <property type="entry name" value="PGM_PMM_I"/>
    <property type="match status" value="1"/>
</dbReference>
<dbReference type="Pfam" id="PF02879">
    <property type="entry name" value="PGM_PMM_II"/>
    <property type="match status" value="1"/>
</dbReference>
<dbReference type="Pfam" id="PF02880">
    <property type="entry name" value="PGM_PMM_III"/>
    <property type="match status" value="1"/>
</dbReference>
<dbReference type="Pfam" id="PF00408">
    <property type="entry name" value="PGM_PMM_IV"/>
    <property type="match status" value="1"/>
</dbReference>
<dbReference type="PRINTS" id="PR00509">
    <property type="entry name" value="PGMPMM"/>
</dbReference>
<dbReference type="SUPFAM" id="SSF55957">
    <property type="entry name" value="Phosphoglucomutase, C-terminal domain"/>
    <property type="match status" value="1"/>
</dbReference>
<dbReference type="SUPFAM" id="SSF53738">
    <property type="entry name" value="Phosphoglucomutase, first 3 domains"/>
    <property type="match status" value="3"/>
</dbReference>
<dbReference type="PROSITE" id="PS00710">
    <property type="entry name" value="PGM_PMM"/>
    <property type="match status" value="1"/>
</dbReference>
<name>GLMM2_SHESR</name>
<organism>
    <name type="scientific">Shewanella sp. (strain MR-7)</name>
    <dbReference type="NCBI Taxonomy" id="60481"/>
    <lineage>
        <taxon>Bacteria</taxon>
        <taxon>Pseudomonadati</taxon>
        <taxon>Pseudomonadota</taxon>
        <taxon>Gammaproteobacteria</taxon>
        <taxon>Alteromonadales</taxon>
        <taxon>Shewanellaceae</taxon>
        <taxon>Shewanella</taxon>
    </lineage>
</organism>
<feature type="chain" id="PRO_0000305678" description="Phosphoglucosamine mutase 2">
    <location>
        <begin position="1"/>
        <end position="450"/>
    </location>
</feature>
<feature type="active site" description="Phosphoserine intermediate" evidence="1">
    <location>
        <position position="101"/>
    </location>
</feature>
<feature type="binding site" description="via phosphate group" evidence="1">
    <location>
        <position position="101"/>
    </location>
    <ligand>
        <name>Mg(2+)</name>
        <dbReference type="ChEBI" id="CHEBI:18420"/>
    </ligand>
</feature>
<feature type="binding site" evidence="1">
    <location>
        <position position="245"/>
    </location>
    <ligand>
        <name>Mg(2+)</name>
        <dbReference type="ChEBI" id="CHEBI:18420"/>
    </ligand>
</feature>
<feature type="binding site" evidence="1">
    <location>
        <position position="247"/>
    </location>
    <ligand>
        <name>Mg(2+)</name>
        <dbReference type="ChEBI" id="CHEBI:18420"/>
    </ligand>
</feature>
<feature type="binding site" evidence="1">
    <location>
        <position position="249"/>
    </location>
    <ligand>
        <name>Mg(2+)</name>
        <dbReference type="ChEBI" id="CHEBI:18420"/>
    </ligand>
</feature>
<feature type="modified residue" description="Phosphoserine" evidence="1">
    <location>
        <position position="101"/>
    </location>
</feature>
<comment type="function">
    <text evidence="1">Catalyzes the conversion of glucosamine-6-phosphate to glucosamine-1-phosphate.</text>
</comment>
<comment type="catalytic activity">
    <reaction evidence="1">
        <text>alpha-D-glucosamine 1-phosphate = D-glucosamine 6-phosphate</text>
        <dbReference type="Rhea" id="RHEA:23424"/>
        <dbReference type="ChEBI" id="CHEBI:58516"/>
        <dbReference type="ChEBI" id="CHEBI:58725"/>
        <dbReference type="EC" id="5.4.2.10"/>
    </reaction>
</comment>
<comment type="cofactor">
    <cofactor evidence="1">
        <name>Mg(2+)</name>
        <dbReference type="ChEBI" id="CHEBI:18420"/>
    </cofactor>
    <text evidence="1">Binds 1 Mg(2+) ion per subunit.</text>
</comment>
<comment type="PTM">
    <text evidence="1">Activated by phosphorylation.</text>
</comment>
<comment type="similarity">
    <text evidence="1">Belongs to the phosphohexose mutase family.</text>
</comment>
<reference key="1">
    <citation type="submission" date="2006-08" db="EMBL/GenBank/DDBJ databases">
        <title>Complete sequence of chromosome 1 of Shewanella sp. MR-7.</title>
        <authorList>
            <person name="Copeland A."/>
            <person name="Lucas S."/>
            <person name="Lapidus A."/>
            <person name="Barry K."/>
            <person name="Detter J.C."/>
            <person name="Glavina del Rio T."/>
            <person name="Hammon N."/>
            <person name="Israni S."/>
            <person name="Dalin E."/>
            <person name="Tice H."/>
            <person name="Pitluck S."/>
            <person name="Kiss H."/>
            <person name="Brettin T."/>
            <person name="Bruce D."/>
            <person name="Han C."/>
            <person name="Tapia R."/>
            <person name="Gilna P."/>
            <person name="Schmutz J."/>
            <person name="Larimer F."/>
            <person name="Land M."/>
            <person name="Hauser L."/>
            <person name="Kyrpides N."/>
            <person name="Mikhailova N."/>
            <person name="Nealson K."/>
            <person name="Konstantinidis K."/>
            <person name="Klappenbach J."/>
            <person name="Tiedje J."/>
            <person name="Richardson P."/>
        </authorList>
    </citation>
    <scope>NUCLEOTIDE SEQUENCE [LARGE SCALE GENOMIC DNA]</scope>
    <source>
        <strain>MR-7</strain>
    </source>
</reference>
<sequence length="450" mass="47824">MSRKYFGTDGVRGKVGTFPITPDFAMKLGWAAGTVLASTGTKEVLIGKDTRISGYMLESAMEAGFSAAGVNVALIGPMPTPAVAYLASTFRADAGVVISASHNPFYDNGIKFFSNTGTKLNDAQELEIEALLEQALEHNALQCVASEKLGKVRRIDDAAGRYIEFCKGTFPNHLSLAGLKIVVDSAHGAAYHIAPNVYRELGAEVISINDKPNGVNINDHCGATHLDSLQSAVMIHEADLGIALDGDADRVMFVDHNGHVVDGDEILFILAQAAYQKGEMQGGVVGTLMSNLGLELALKQMGIPFLRAKVGDRYVVEQLKETGWQLGGEGSGHILSLQHASTGDGIVASLQVLKAILESGKRLAELKAGMTKLPQVLINVRLTSGSADSILSKDSVKQAVITAEEVLGNQGRVLLRKSGTEPLIRVMVESTDISLTQQQAEYIAQAVKVA</sequence>
<proteinExistence type="inferred from homology"/>
<protein>
    <recommendedName>
        <fullName evidence="1">Phosphoglucosamine mutase 2</fullName>
        <ecNumber evidence="1">5.4.2.10</ecNumber>
    </recommendedName>
</protein>
<gene>
    <name evidence="1" type="primary">glmM2</name>
    <name type="ordered locus">Shewmr7_1398</name>
</gene>
<keyword id="KW-0413">Isomerase</keyword>
<keyword id="KW-0460">Magnesium</keyword>
<keyword id="KW-0479">Metal-binding</keyword>
<keyword id="KW-0597">Phosphoprotein</keyword>
<evidence type="ECO:0000255" key="1">
    <source>
        <dbReference type="HAMAP-Rule" id="MF_01554"/>
    </source>
</evidence>
<accession>Q0HWV8</accession>